<feature type="chain" id="PRO_1000098644" description="tRNA dimethylallyltransferase">
    <location>
        <begin position="1"/>
        <end position="300"/>
    </location>
</feature>
<feature type="region of interest" description="Interaction with substrate tRNA" evidence="1">
    <location>
        <begin position="35"/>
        <end position="38"/>
    </location>
</feature>
<feature type="binding site" evidence="1">
    <location>
        <begin position="11"/>
        <end position="18"/>
    </location>
    <ligand>
        <name>ATP</name>
        <dbReference type="ChEBI" id="CHEBI:30616"/>
    </ligand>
</feature>
<feature type="binding site" evidence="1">
    <location>
        <begin position="13"/>
        <end position="18"/>
    </location>
    <ligand>
        <name>substrate</name>
    </ligand>
</feature>
<feature type="site" description="Interaction with substrate tRNA" evidence="1">
    <location>
        <position position="101"/>
    </location>
</feature>
<feature type="site" description="Interaction with substrate tRNA" evidence="1">
    <location>
        <position position="123"/>
    </location>
</feature>
<accession>B2S1G5</accession>
<proteinExistence type="inferred from homology"/>
<name>MIAA_BORHD</name>
<gene>
    <name evidence="1" type="primary">miaA</name>
    <name type="ordered locus">BH0821</name>
</gene>
<sequence>MKRNKIVFIFGPTAVGKSELLLNFPKGVAEIINVDSVQVYKEFDIASCKPSIELRAHVKHHLVDFLEPIEEYNLGIFYKEACEIIENLRVQKKLPVFVGGSAFYFKHLKYGLPSTPPVSSEIRLHINSLFTTRGKNYLLEELKRVDFERYESISKNDIYRIKRSLEVYYQTGIPISQFLKRGQMLANVLAIGLRRPMEEMRSRIISRVKNMIDCGLLEEIKSLLGKGYNETTPAFKGIGYREFLLWKSRPYSMLNDIINLIVKNSFLYVKRQMTFFDKIPNVLWFHPDDDLKDILDLIFV</sequence>
<comment type="function">
    <text evidence="1">Catalyzes the transfer of a dimethylallyl group onto the adenine at position 37 in tRNAs that read codons beginning with uridine, leading to the formation of N6-(dimethylallyl)adenosine (i(6)A).</text>
</comment>
<comment type="catalytic activity">
    <reaction evidence="1">
        <text>adenosine(37) in tRNA + dimethylallyl diphosphate = N(6)-dimethylallyladenosine(37) in tRNA + diphosphate</text>
        <dbReference type="Rhea" id="RHEA:26482"/>
        <dbReference type="Rhea" id="RHEA-COMP:10162"/>
        <dbReference type="Rhea" id="RHEA-COMP:10375"/>
        <dbReference type="ChEBI" id="CHEBI:33019"/>
        <dbReference type="ChEBI" id="CHEBI:57623"/>
        <dbReference type="ChEBI" id="CHEBI:74411"/>
        <dbReference type="ChEBI" id="CHEBI:74415"/>
        <dbReference type="EC" id="2.5.1.75"/>
    </reaction>
</comment>
<comment type="cofactor">
    <cofactor evidence="1">
        <name>Mg(2+)</name>
        <dbReference type="ChEBI" id="CHEBI:18420"/>
    </cofactor>
</comment>
<comment type="subunit">
    <text evidence="1">Monomer.</text>
</comment>
<comment type="similarity">
    <text evidence="1">Belongs to the IPP transferase family.</text>
</comment>
<organism>
    <name type="scientific">Borrelia hermsii (strain HS1 / DAH)</name>
    <dbReference type="NCBI Taxonomy" id="314723"/>
    <lineage>
        <taxon>Bacteria</taxon>
        <taxon>Pseudomonadati</taxon>
        <taxon>Spirochaetota</taxon>
        <taxon>Spirochaetia</taxon>
        <taxon>Spirochaetales</taxon>
        <taxon>Borreliaceae</taxon>
        <taxon>Borrelia</taxon>
    </lineage>
</organism>
<dbReference type="EC" id="2.5.1.75" evidence="1"/>
<dbReference type="EMBL" id="CP000048">
    <property type="protein sequence ID" value="AAX17317.1"/>
    <property type="molecule type" value="Genomic_DNA"/>
</dbReference>
<dbReference type="RefSeq" id="WP_012422567.1">
    <property type="nucleotide sequence ID" value="NZ_CP073136.1"/>
</dbReference>
<dbReference type="SMR" id="B2S1G5"/>
<dbReference type="KEGG" id="bhr:BH0821"/>
<dbReference type="HOGENOM" id="CLU_032616_0_2_12"/>
<dbReference type="Proteomes" id="UP000008834">
    <property type="component" value="Chromosome"/>
</dbReference>
<dbReference type="GO" id="GO:0005524">
    <property type="term" value="F:ATP binding"/>
    <property type="evidence" value="ECO:0007669"/>
    <property type="project" value="UniProtKB-UniRule"/>
</dbReference>
<dbReference type="GO" id="GO:0052381">
    <property type="term" value="F:tRNA dimethylallyltransferase activity"/>
    <property type="evidence" value="ECO:0007669"/>
    <property type="project" value="UniProtKB-UniRule"/>
</dbReference>
<dbReference type="GO" id="GO:0006400">
    <property type="term" value="P:tRNA modification"/>
    <property type="evidence" value="ECO:0007669"/>
    <property type="project" value="TreeGrafter"/>
</dbReference>
<dbReference type="Gene3D" id="1.10.20.140">
    <property type="match status" value="1"/>
</dbReference>
<dbReference type="Gene3D" id="3.40.50.300">
    <property type="entry name" value="P-loop containing nucleotide triphosphate hydrolases"/>
    <property type="match status" value="1"/>
</dbReference>
<dbReference type="HAMAP" id="MF_00185">
    <property type="entry name" value="IPP_trans"/>
    <property type="match status" value="1"/>
</dbReference>
<dbReference type="InterPro" id="IPR039657">
    <property type="entry name" value="Dimethylallyltransferase"/>
</dbReference>
<dbReference type="InterPro" id="IPR018022">
    <property type="entry name" value="IPT"/>
</dbReference>
<dbReference type="InterPro" id="IPR027417">
    <property type="entry name" value="P-loop_NTPase"/>
</dbReference>
<dbReference type="NCBIfam" id="TIGR00174">
    <property type="entry name" value="miaA"/>
    <property type="match status" value="1"/>
</dbReference>
<dbReference type="PANTHER" id="PTHR11088">
    <property type="entry name" value="TRNA DIMETHYLALLYLTRANSFERASE"/>
    <property type="match status" value="1"/>
</dbReference>
<dbReference type="PANTHER" id="PTHR11088:SF60">
    <property type="entry name" value="TRNA DIMETHYLALLYLTRANSFERASE"/>
    <property type="match status" value="1"/>
</dbReference>
<dbReference type="Pfam" id="PF01715">
    <property type="entry name" value="IPPT"/>
    <property type="match status" value="1"/>
</dbReference>
<dbReference type="SUPFAM" id="SSF52540">
    <property type="entry name" value="P-loop containing nucleoside triphosphate hydrolases"/>
    <property type="match status" value="1"/>
</dbReference>
<evidence type="ECO:0000255" key="1">
    <source>
        <dbReference type="HAMAP-Rule" id="MF_00185"/>
    </source>
</evidence>
<keyword id="KW-0067">ATP-binding</keyword>
<keyword id="KW-0460">Magnesium</keyword>
<keyword id="KW-0547">Nucleotide-binding</keyword>
<keyword id="KW-0808">Transferase</keyword>
<keyword id="KW-0819">tRNA processing</keyword>
<reference key="1">
    <citation type="submission" date="2004-12" db="EMBL/GenBank/DDBJ databases">
        <title>The genome sequence of Borrelia hermsii and Borrelia turicatae: comparative analysis of two agents of endemic N. America relapsing fever.</title>
        <authorList>
            <person name="Porcella S.F."/>
            <person name="Raffel S.J."/>
            <person name="Schrumpf M.E."/>
            <person name="Montgomery B."/>
            <person name="Smith T."/>
            <person name="Schwan T.G."/>
        </authorList>
    </citation>
    <scope>NUCLEOTIDE SEQUENCE [LARGE SCALE GENOMIC DNA]</scope>
    <source>
        <strain>HS1 / DAH</strain>
    </source>
</reference>
<protein>
    <recommendedName>
        <fullName evidence="1">tRNA dimethylallyltransferase</fullName>
        <ecNumber evidence="1">2.5.1.75</ecNumber>
    </recommendedName>
    <alternativeName>
        <fullName evidence="1">Dimethylallyl diphosphate:tRNA dimethylallyltransferase</fullName>
        <shortName evidence="1">DMAPP:tRNA dimethylallyltransferase</shortName>
        <shortName evidence="1">DMATase</shortName>
    </alternativeName>
    <alternativeName>
        <fullName evidence="1">Isopentenyl-diphosphate:tRNA isopentenyltransferase</fullName>
        <shortName evidence="1">IPP transferase</shortName>
        <shortName evidence="1">IPPT</shortName>
        <shortName evidence="1">IPTase</shortName>
    </alternativeName>
</protein>